<protein>
    <recommendedName>
        <fullName>Protein WFDC9</fullName>
    </recommendedName>
</protein>
<proteinExistence type="inferred from homology"/>
<accession>Q6IE41</accession>
<gene>
    <name type="primary">Wfdc9</name>
</gene>
<comment type="subcellular location">
    <subcellularLocation>
        <location evidence="2">Secreted</location>
    </subcellularLocation>
</comment>
<name>WFDC9_RAT</name>
<organism>
    <name type="scientific">Rattus norvegicus</name>
    <name type="common">Rat</name>
    <dbReference type="NCBI Taxonomy" id="10116"/>
    <lineage>
        <taxon>Eukaryota</taxon>
        <taxon>Metazoa</taxon>
        <taxon>Chordata</taxon>
        <taxon>Craniata</taxon>
        <taxon>Vertebrata</taxon>
        <taxon>Euteleostomi</taxon>
        <taxon>Mammalia</taxon>
        <taxon>Eutheria</taxon>
        <taxon>Euarchontoglires</taxon>
        <taxon>Glires</taxon>
        <taxon>Rodentia</taxon>
        <taxon>Myomorpha</taxon>
        <taxon>Muroidea</taxon>
        <taxon>Muridae</taxon>
        <taxon>Murinae</taxon>
        <taxon>Rattus</taxon>
    </lineage>
</organism>
<feature type="signal peptide" evidence="1">
    <location>
        <begin position="1"/>
        <end position="19"/>
    </location>
</feature>
<feature type="chain" id="PRO_0000041386" description="Protein WFDC9">
    <location>
        <begin position="20"/>
        <end position="74"/>
    </location>
</feature>
<keyword id="KW-1185">Reference proteome</keyword>
<keyword id="KW-0964">Secreted</keyword>
<keyword id="KW-0732">Signal</keyword>
<evidence type="ECO:0000255" key="1"/>
<evidence type="ECO:0000305" key="2"/>
<sequence>MKFWILLLTVSAHGIVVFLHVFGSLKEKPEEIEQCWVQPPARFCGRRCTKVQKCVSPNYTCCWTYCGNICLNNE</sequence>
<dbReference type="EMBL" id="AC096128">
    <property type="status" value="NOT_ANNOTATED_CDS"/>
    <property type="molecule type" value="Genomic_DNA"/>
</dbReference>
<dbReference type="EMBL" id="BN000352">
    <property type="protein sequence ID" value="CAE51404.1"/>
    <property type="molecule type" value="mRNA"/>
</dbReference>
<dbReference type="RefSeq" id="NP_001008868.1">
    <property type="nucleotide sequence ID" value="NM_001008868.1"/>
</dbReference>
<dbReference type="STRING" id="10116.ENSRNOP00000039834"/>
<dbReference type="PhosphoSitePlus" id="Q6IE41"/>
<dbReference type="PaxDb" id="10116-ENSRNOP00000039834"/>
<dbReference type="UCSC" id="RGD:1303087">
    <property type="organism name" value="rat"/>
</dbReference>
<dbReference type="AGR" id="RGD:1303087"/>
<dbReference type="RGD" id="1303087">
    <property type="gene designation" value="Wfdc9"/>
</dbReference>
<dbReference type="VEuPathDB" id="HostDB:ENSRNOG00000031380"/>
<dbReference type="eggNOG" id="ENOG502TGNJ">
    <property type="taxonomic scope" value="Eukaryota"/>
</dbReference>
<dbReference type="HOGENOM" id="CLU_191873_0_0_1"/>
<dbReference type="InParanoid" id="Q6IE41"/>
<dbReference type="PhylomeDB" id="Q6IE41"/>
<dbReference type="PRO" id="PR:Q6IE41"/>
<dbReference type="Proteomes" id="UP000002494">
    <property type="component" value="Chromosome 3"/>
</dbReference>
<dbReference type="Bgee" id="ENSRNOG00000031380">
    <property type="expression patterns" value="Expressed in testis and 2 other cell types or tissues"/>
</dbReference>
<dbReference type="GO" id="GO:0005615">
    <property type="term" value="C:extracellular space"/>
    <property type="evidence" value="ECO:0000318"/>
    <property type="project" value="GO_Central"/>
</dbReference>
<dbReference type="GO" id="GO:0004867">
    <property type="term" value="F:serine-type endopeptidase inhibitor activity"/>
    <property type="evidence" value="ECO:0000318"/>
    <property type="project" value="GO_Central"/>
</dbReference>
<dbReference type="GO" id="GO:0019731">
    <property type="term" value="P:antibacterial humoral response"/>
    <property type="evidence" value="ECO:0000318"/>
    <property type="project" value="GO_Central"/>
</dbReference>
<dbReference type="GO" id="GO:0045087">
    <property type="term" value="P:innate immune response"/>
    <property type="evidence" value="ECO:0000318"/>
    <property type="project" value="GO_Central"/>
</dbReference>
<reference key="1">
    <citation type="journal article" date="2004" name="Nature">
        <title>Genome sequence of the Brown Norway rat yields insights into mammalian evolution.</title>
        <authorList>
            <person name="Gibbs R.A."/>
            <person name="Weinstock G.M."/>
            <person name="Metzker M.L."/>
            <person name="Muzny D.M."/>
            <person name="Sodergren E.J."/>
            <person name="Scherer S."/>
            <person name="Scott G."/>
            <person name="Steffen D."/>
            <person name="Worley K.C."/>
            <person name="Burch P.E."/>
            <person name="Okwuonu G."/>
            <person name="Hines S."/>
            <person name="Lewis L."/>
            <person name="Deramo C."/>
            <person name="Delgado O."/>
            <person name="Dugan-Rocha S."/>
            <person name="Miner G."/>
            <person name="Morgan M."/>
            <person name="Hawes A."/>
            <person name="Gill R."/>
            <person name="Holt R.A."/>
            <person name="Adams M.D."/>
            <person name="Amanatides P.G."/>
            <person name="Baden-Tillson H."/>
            <person name="Barnstead M."/>
            <person name="Chin S."/>
            <person name="Evans C.A."/>
            <person name="Ferriera S."/>
            <person name="Fosler C."/>
            <person name="Glodek A."/>
            <person name="Gu Z."/>
            <person name="Jennings D."/>
            <person name="Kraft C.L."/>
            <person name="Nguyen T."/>
            <person name="Pfannkoch C.M."/>
            <person name="Sitter C."/>
            <person name="Sutton G.G."/>
            <person name="Venter J.C."/>
            <person name="Woodage T."/>
            <person name="Smith D."/>
            <person name="Lee H.-M."/>
            <person name="Gustafson E."/>
            <person name="Cahill P."/>
            <person name="Kana A."/>
            <person name="Doucette-Stamm L."/>
            <person name="Weinstock K."/>
            <person name="Fechtel K."/>
            <person name="Weiss R.B."/>
            <person name="Dunn D.M."/>
            <person name="Green E.D."/>
            <person name="Blakesley R.W."/>
            <person name="Bouffard G.G."/>
            <person name="De Jong P.J."/>
            <person name="Osoegawa K."/>
            <person name="Zhu B."/>
            <person name="Marra M."/>
            <person name="Schein J."/>
            <person name="Bosdet I."/>
            <person name="Fjell C."/>
            <person name="Jones S."/>
            <person name="Krzywinski M."/>
            <person name="Mathewson C."/>
            <person name="Siddiqui A."/>
            <person name="Wye N."/>
            <person name="McPherson J."/>
            <person name="Zhao S."/>
            <person name="Fraser C.M."/>
            <person name="Shetty J."/>
            <person name="Shatsman S."/>
            <person name="Geer K."/>
            <person name="Chen Y."/>
            <person name="Abramzon S."/>
            <person name="Nierman W.C."/>
            <person name="Havlak P.H."/>
            <person name="Chen R."/>
            <person name="Durbin K.J."/>
            <person name="Egan A."/>
            <person name="Ren Y."/>
            <person name="Song X.-Z."/>
            <person name="Li B."/>
            <person name="Liu Y."/>
            <person name="Qin X."/>
            <person name="Cawley S."/>
            <person name="Cooney A.J."/>
            <person name="D'Souza L.M."/>
            <person name="Martin K."/>
            <person name="Wu J.Q."/>
            <person name="Gonzalez-Garay M.L."/>
            <person name="Jackson A.R."/>
            <person name="Kalafus K.J."/>
            <person name="McLeod M.P."/>
            <person name="Milosavljevic A."/>
            <person name="Virk D."/>
            <person name="Volkov A."/>
            <person name="Wheeler D.A."/>
            <person name="Zhang Z."/>
            <person name="Bailey J.A."/>
            <person name="Eichler E.E."/>
            <person name="Tuzun E."/>
            <person name="Birney E."/>
            <person name="Mongin E."/>
            <person name="Ureta-Vidal A."/>
            <person name="Woodwark C."/>
            <person name="Zdobnov E."/>
            <person name="Bork P."/>
            <person name="Suyama M."/>
            <person name="Torrents D."/>
            <person name="Alexandersson M."/>
            <person name="Trask B.J."/>
            <person name="Young J.M."/>
            <person name="Huang H."/>
            <person name="Wang H."/>
            <person name="Xing H."/>
            <person name="Daniels S."/>
            <person name="Gietzen D."/>
            <person name="Schmidt J."/>
            <person name="Stevens K."/>
            <person name="Vitt U."/>
            <person name="Wingrove J."/>
            <person name="Camara F."/>
            <person name="Mar Alba M."/>
            <person name="Abril J.F."/>
            <person name="Guigo R."/>
            <person name="Smit A."/>
            <person name="Dubchak I."/>
            <person name="Rubin E.M."/>
            <person name="Couronne O."/>
            <person name="Poliakov A."/>
            <person name="Huebner N."/>
            <person name="Ganten D."/>
            <person name="Goesele C."/>
            <person name="Hummel O."/>
            <person name="Kreitler T."/>
            <person name="Lee Y.-A."/>
            <person name="Monti J."/>
            <person name="Schulz H."/>
            <person name="Zimdahl H."/>
            <person name="Himmelbauer H."/>
            <person name="Lehrach H."/>
            <person name="Jacob H.J."/>
            <person name="Bromberg S."/>
            <person name="Gullings-Handley J."/>
            <person name="Jensen-Seaman M.I."/>
            <person name="Kwitek A.E."/>
            <person name="Lazar J."/>
            <person name="Pasko D."/>
            <person name="Tonellato P.J."/>
            <person name="Twigger S."/>
            <person name="Ponting C.P."/>
            <person name="Duarte J.M."/>
            <person name="Rice S."/>
            <person name="Goodstadt L."/>
            <person name="Beatson S.A."/>
            <person name="Emes R.D."/>
            <person name="Winter E.E."/>
            <person name="Webber C."/>
            <person name="Brandt P."/>
            <person name="Nyakatura G."/>
            <person name="Adetobi M."/>
            <person name="Chiaromonte F."/>
            <person name="Elnitski L."/>
            <person name="Eswara P."/>
            <person name="Hardison R.C."/>
            <person name="Hou M."/>
            <person name="Kolbe D."/>
            <person name="Makova K."/>
            <person name="Miller W."/>
            <person name="Nekrutenko A."/>
            <person name="Riemer C."/>
            <person name="Schwartz S."/>
            <person name="Taylor J."/>
            <person name="Yang S."/>
            <person name="Zhang Y."/>
            <person name="Lindpaintner K."/>
            <person name="Andrews T.D."/>
            <person name="Caccamo M."/>
            <person name="Clamp M."/>
            <person name="Clarke L."/>
            <person name="Curwen V."/>
            <person name="Durbin R.M."/>
            <person name="Eyras E."/>
            <person name="Searle S.M."/>
            <person name="Cooper G.M."/>
            <person name="Batzoglou S."/>
            <person name="Brudno M."/>
            <person name="Sidow A."/>
            <person name="Stone E.A."/>
            <person name="Payseur B.A."/>
            <person name="Bourque G."/>
            <person name="Lopez-Otin C."/>
            <person name="Puente X.S."/>
            <person name="Chakrabarti K."/>
            <person name="Chatterji S."/>
            <person name="Dewey C."/>
            <person name="Pachter L."/>
            <person name="Bray N."/>
            <person name="Yap V.B."/>
            <person name="Caspi A."/>
            <person name="Tesler G."/>
            <person name="Pevzner P.A."/>
            <person name="Haussler D."/>
            <person name="Roskin K.M."/>
            <person name="Baertsch R."/>
            <person name="Clawson H."/>
            <person name="Furey T.S."/>
            <person name="Hinrichs A.S."/>
            <person name="Karolchik D."/>
            <person name="Kent W.J."/>
            <person name="Rosenbloom K.R."/>
            <person name="Trumbower H."/>
            <person name="Weirauch M."/>
            <person name="Cooper D.N."/>
            <person name="Stenson P.D."/>
            <person name="Ma B."/>
            <person name="Brent M."/>
            <person name="Arumugam M."/>
            <person name="Shteynberg D."/>
            <person name="Copley R.R."/>
            <person name="Taylor M.S."/>
            <person name="Riethman H."/>
            <person name="Mudunuri U."/>
            <person name="Peterson J."/>
            <person name="Guyer M."/>
            <person name="Felsenfeld A."/>
            <person name="Old S."/>
            <person name="Mockrin S."/>
            <person name="Collins F.S."/>
        </authorList>
    </citation>
    <scope>NUCLEOTIDE SEQUENCE [LARGE SCALE GENOMIC DNA]</scope>
    <source>
        <strain>Brown Norway</strain>
    </source>
</reference>
<reference key="2">
    <citation type="journal article" date="2004" name="Genome Res.">
        <title>A genomic analysis of rat proteases and protease inhibitors.</title>
        <authorList>
            <person name="Puente X.S."/>
            <person name="Lopez-Otin C."/>
        </authorList>
    </citation>
    <scope>IDENTIFICATION</scope>
</reference>